<name>CDND_ACIS2</name>
<evidence type="ECO:0000250" key="1">
    <source>
        <dbReference type="UniProtKB" id="G2SLH8"/>
    </source>
</evidence>
<evidence type="ECO:0000269" key="2">
    <source>
    </source>
</evidence>
<evidence type="ECO:0000303" key="3">
    <source>
    </source>
</evidence>
<evidence type="ECO:0000303" key="4">
    <source>
    </source>
</evidence>
<evidence type="ECO:0000303" key="5">
    <source>
    </source>
</evidence>
<evidence type="ECO:0000305" key="6">
    <source>
    </source>
</evidence>
<evidence type="ECO:0000305" key="7">
    <source>
    </source>
</evidence>
<keyword id="KW-0051">Antiviral defense</keyword>
<keyword id="KW-0067">ATP-binding</keyword>
<keyword id="KW-0460">Magnesium</keyword>
<keyword id="KW-0479">Metal-binding</keyword>
<keyword id="KW-0546">Nucleotide metabolism</keyword>
<keyword id="KW-0547">Nucleotide-binding</keyword>
<keyword id="KW-0548">Nucleotidyltransferase</keyword>
<keyword id="KW-0808">Transferase</keyword>
<reference key="1">
    <citation type="submission" date="2008-10" db="EMBL/GenBank/DDBJ databases">
        <authorList>
            <person name="Qin X."/>
            <person name="Bachman B."/>
            <person name="Battles P."/>
            <person name="Bell A."/>
            <person name="Bess C."/>
            <person name="Bickham C."/>
            <person name="Chaboub L."/>
            <person name="Chen D."/>
            <person name="Coyle M."/>
            <person name="Deiros D.R."/>
            <person name="Dinh H."/>
            <person name="Forbes L."/>
            <person name="Fowler G."/>
            <person name="Francisco L."/>
            <person name="Fu Q."/>
            <person name="Gubbala S."/>
            <person name="Hale W."/>
            <person name="Han Y."/>
            <person name="Hemphill L."/>
            <person name="Highlander S.K."/>
            <person name="Hirani K."/>
            <person name="Hogues M."/>
            <person name="Jackson L."/>
            <person name="Jakkamsetti A."/>
            <person name="Javaid M."/>
            <person name="Jiang H."/>
            <person name="Korchina V."/>
            <person name="Kovar C."/>
            <person name="Lara F."/>
            <person name="Lee S."/>
            <person name="Mata R."/>
            <person name="Mathew T."/>
            <person name="Moen C."/>
            <person name="Morales K."/>
            <person name="Munidasa M."/>
            <person name="Nazareth L."/>
            <person name="Ngo R."/>
            <person name="Nguyen L."/>
            <person name="Okwuonu G."/>
            <person name="Ongeri F."/>
            <person name="Patil S."/>
            <person name="Petrosino J."/>
            <person name="Pham C."/>
            <person name="Pham P."/>
            <person name="Pu L.-L."/>
            <person name="Puazo M."/>
            <person name="Raj R."/>
            <person name="Reid J."/>
            <person name="Rouhana J."/>
            <person name="Saada N."/>
            <person name="Shang Y."/>
            <person name="Simmons D."/>
            <person name="Thornton R."/>
            <person name="Warren J."/>
            <person name="Weissenberger G."/>
            <person name="Zhang J."/>
            <person name="Zhang L."/>
            <person name="Zhou C."/>
            <person name="Zhu D."/>
            <person name="Muzny D."/>
            <person name="Worley K."/>
            <person name="Gibbs R."/>
        </authorList>
    </citation>
    <scope>NUCLEOTIDE SEQUENCE [LARGE SCALE GENOMIC DNA]</scope>
    <source>
        <strain>ATCC 27244 / 9458</strain>
    </source>
</reference>
<reference key="2">
    <citation type="journal article" date="2019" name="Nature">
        <title>Bacterial cGAS-like enzymes synthesize diverse nucleotide signals.</title>
        <authorList>
            <person name="Whiteley A.T."/>
            <person name="Eaglesham J.B."/>
            <person name="de Oliveira Mann C.C."/>
            <person name="Morehouse B.R."/>
            <person name="Lowey B."/>
            <person name="Nieminen E.A."/>
            <person name="Danilchanka O."/>
            <person name="King D.S."/>
            <person name="Lee A.S.Y."/>
            <person name="Mekalanos J.J."/>
            <person name="Kranzusch P.J."/>
        </authorList>
    </citation>
    <scope>NOMENCLATURE</scope>
    <scope>SIMILARITY</scope>
    <source>
        <strain>ATCC 27244 / 9458</strain>
    </source>
</reference>
<reference key="3">
    <citation type="journal article" date="2020" name="Cell">
        <title>CBASS immunity uses CARF-related effectors to sense 3'-5' and 2'-5'-linked cyclic oligonucleotide signals and protect bacteria from phage infection.</title>
        <authorList>
            <person name="Lowey B."/>
            <person name="Whiteley A.T."/>
            <person name="Keszei A.F.A."/>
            <person name="Morehouse B.R."/>
            <person name="Antine S.P."/>
            <person name="Cabrera V.J."/>
            <person name="Kashin D."/>
            <person name="Schwede F."/>
            <person name="Mekalanos J.J."/>
            <person name="Shao S."/>
            <person name="Lee A.S.Y."/>
            <person name="Kranzusch P.J."/>
        </authorList>
    </citation>
    <scope>FUNCTION</scope>
    <scope>CATALYTIC ACTIVITY</scope>
    <scope>OPERON STRUCTURE</scope>
    <source>
        <strain>ATCC 27244 / 9458</strain>
    </source>
</reference>
<reference key="4">
    <citation type="journal article" date="2020" name="Nat. Microbiol.">
        <title>Diversity and classification of cyclic-oligonucleotide-based anti-phage signalling systems.</title>
        <authorList>
            <person name="Millman A."/>
            <person name="Melamed S."/>
            <person name="Amitai G."/>
            <person name="Sorek R."/>
        </authorList>
    </citation>
    <scope>CLASSIFICATION AND NOMENCLATURE</scope>
</reference>
<accession>C0VHD2</accession>
<proteinExistence type="evidence at protein level"/>
<sequence>MGSERIMTTQQQFLDLLSDIEPSTTTVNDCSSAHNTLRDALKVHNEFSKVHVHTFLSGSYKRNTAVRPTTIGGITQRPDVDIIALTNHTINDDPQIVLDAVHTALKDIGYTDLTVNRRSVNVKLKKVDMDVVPIISDGYGGYLIPDIHLEEWLVTNPPAHTEWTVEVNKNANGRFKPLVKLFKWWRRENLSDLKRPKGFILECLVAKHMNYYESNYEKLFVYLLETIRDSYGIYASLGIIPHLEDPGVAGNNVFSAVTADEFKTFFEKVEEQAAIARNALNETDDDKALALWRQVLGNRFPRSASHKSANSADMASSLIRSALGAGLTFPSTPVYPNKPGGFA</sequence>
<feature type="chain" id="PRO_0000451853" description="Cyclic AMP-AMP-AMP synthase">
    <location>
        <begin position="1"/>
        <end position="343"/>
    </location>
</feature>
<protein>
    <recommendedName>
        <fullName evidence="4">Cyclic AMP-AMP-AMP synthase</fullName>
        <ecNumber evidence="2">2.7.7.-</ecNumber>
    </recommendedName>
    <alternativeName>
        <fullName evidence="3">CD-NTase037</fullName>
    </alternativeName>
</protein>
<dbReference type="EC" id="2.7.7.-" evidence="2"/>
<dbReference type="EMBL" id="ABYN01000046">
    <property type="protein sequence ID" value="EEH69894.1"/>
    <property type="molecule type" value="Genomic_DNA"/>
</dbReference>
<dbReference type="SMR" id="C0VHD2"/>
<dbReference type="eggNOG" id="COG1746">
    <property type="taxonomic scope" value="Bacteria"/>
</dbReference>
<dbReference type="HOGENOM" id="CLU_843621_0_0_6"/>
<dbReference type="Proteomes" id="UP000012347">
    <property type="component" value="Unassembled WGS sequence"/>
</dbReference>
<dbReference type="GO" id="GO:0005524">
    <property type="term" value="F:ATP binding"/>
    <property type="evidence" value="ECO:0007669"/>
    <property type="project" value="UniProtKB-KW"/>
</dbReference>
<dbReference type="GO" id="GO:0046872">
    <property type="term" value="F:metal ion binding"/>
    <property type="evidence" value="ECO:0007669"/>
    <property type="project" value="UniProtKB-KW"/>
</dbReference>
<dbReference type="GO" id="GO:0016779">
    <property type="term" value="F:nucleotidyltransferase activity"/>
    <property type="evidence" value="ECO:0007669"/>
    <property type="project" value="UniProtKB-KW"/>
</dbReference>
<dbReference type="GO" id="GO:0051607">
    <property type="term" value="P:defense response to virus"/>
    <property type="evidence" value="ECO:0007669"/>
    <property type="project" value="UniProtKB-KW"/>
</dbReference>
<dbReference type="GO" id="GO:0009117">
    <property type="term" value="P:nucleotide metabolic process"/>
    <property type="evidence" value="ECO:0007669"/>
    <property type="project" value="UniProtKB-KW"/>
</dbReference>
<dbReference type="CDD" id="cd05400">
    <property type="entry name" value="NT_2-5OAS_ClassI-CCAase"/>
    <property type="match status" value="1"/>
</dbReference>
<dbReference type="Gene3D" id="3.30.460.10">
    <property type="entry name" value="Beta Polymerase, domain 2"/>
    <property type="match status" value="1"/>
</dbReference>
<dbReference type="InterPro" id="IPR006116">
    <property type="entry name" value="NT_2-5OAS_ClassI-CCAase"/>
</dbReference>
<dbReference type="InterPro" id="IPR043519">
    <property type="entry name" value="NT_sf"/>
</dbReference>
<dbReference type="Pfam" id="PF18144">
    <property type="entry name" value="SMODS"/>
    <property type="match status" value="1"/>
</dbReference>
<dbReference type="SUPFAM" id="SSF81301">
    <property type="entry name" value="Nucleotidyltransferase"/>
    <property type="match status" value="1"/>
</dbReference>
<organism>
    <name type="scientific">Acinetobacter sp. (strain ATCC 27244 / 9458)</name>
    <dbReference type="NCBI Taxonomy" id="525244"/>
    <lineage>
        <taxon>Bacteria</taxon>
        <taxon>Pseudomonadati</taxon>
        <taxon>Pseudomonadota</taxon>
        <taxon>Gammaproteobacteria</taxon>
        <taxon>Moraxellales</taxon>
        <taxon>Moraxellaceae</taxon>
        <taxon>Acinetobacter</taxon>
    </lineage>
</organism>
<gene>
    <name evidence="3" type="primary">cdnD01</name>
    <name type="ORF">HMPREF0023_0551</name>
</gene>
<comment type="function">
    <text evidence="2 5 7">Cyclic nucleotide synthase (second messenger synthase) of a CBASS antivirus system (PubMed:32544385). CBASS (cyclic oligonucleotide-based antiphage signaling system) provides immunity against bacteriophage. The CD-NTase protein synthesizes cyclic nucleotides in response to infection; these serve as specific second messenger signals. The signals activate a diverse range of effectors, leading to bacterial cell death and thus abortive phage infection. A type II-C(AAAA) CBASS system (PubMed:32839535).</text>
</comment>
<comment type="function">
    <text evidence="2">Cyclic trinucleotide synthase that catalyzes the synthesis of 2',3',3'-cyclic AMP-AMP-AMP (2',3',3'-c-tri-AMP or 2'3'3'-cAAA) as the major product, as well as another cyclic AMP(4) 2'-5'-linked minor product that acts as a second messenger for cell signal transduction.</text>
</comment>
<comment type="catalytic activity">
    <reaction evidence="2">
        <text>3 ATP = 2',3',3'-c-tri-AMP + 3 diphosphate</text>
        <dbReference type="Rhea" id="RHEA:65488"/>
        <dbReference type="ChEBI" id="CHEBI:30616"/>
        <dbReference type="ChEBI" id="CHEBI:33019"/>
        <dbReference type="ChEBI" id="CHEBI:156512"/>
    </reaction>
    <physiologicalReaction direction="left-to-right" evidence="7">
        <dbReference type="Rhea" id="RHEA:65489"/>
    </physiologicalReaction>
</comment>
<comment type="cofactor">
    <cofactor evidence="1">
        <name>Mg(2+)</name>
        <dbReference type="ChEBI" id="CHEBI:18420"/>
    </cofactor>
    <text evidence="1">Binds 1 Mg(2+) ion per subunit.</text>
</comment>
<comment type="induction">
    <text evidence="7">Part of the CBASS operon consisting of cdnD-cap2-cap3-cap4.</text>
</comment>
<comment type="similarity">
    <text evidence="6">Belongs to the CD-NTase family. D01 subfamily.</text>
</comment>